<reference key="1">
    <citation type="journal article" date="2004" name="J. Bacteriol.">
        <title>Complete genome sequence of Rickettsia typhi and comparison with sequences of other Rickettsiae.</title>
        <authorList>
            <person name="McLeod M.P."/>
            <person name="Qin X."/>
            <person name="Karpathy S.E."/>
            <person name="Gioia J."/>
            <person name="Highlander S.K."/>
            <person name="Fox G.E."/>
            <person name="McNeill T.Z."/>
            <person name="Jiang H."/>
            <person name="Muzny D."/>
            <person name="Jacob L.S."/>
            <person name="Hawes A.C."/>
            <person name="Sodergren E."/>
            <person name="Gill R."/>
            <person name="Hume J."/>
            <person name="Morgan M."/>
            <person name="Fan G."/>
            <person name="Amin A.G."/>
            <person name="Gibbs R.A."/>
            <person name="Hong C."/>
            <person name="Yu X.-J."/>
            <person name="Walker D.H."/>
            <person name="Weinstock G.M."/>
        </authorList>
    </citation>
    <scope>NUCLEOTIDE SEQUENCE [LARGE SCALE GENOMIC DNA]</scope>
    <source>
        <strain>ATCC VR-144 / Wilmington</strain>
    </source>
</reference>
<proteinExistence type="inferred from homology"/>
<feature type="chain" id="PRO_0000131967" description="Cytidylate kinase">
    <location>
        <begin position="1"/>
        <end position="219"/>
    </location>
</feature>
<feature type="binding site" evidence="1">
    <location>
        <begin position="21"/>
        <end position="29"/>
    </location>
    <ligand>
        <name>ATP</name>
        <dbReference type="ChEBI" id="CHEBI:30616"/>
    </ligand>
</feature>
<sequence length="219" mass="24348">MVDLKTKAFDIAQNFTISLDGPAASGKGTIGLILAKKFALKYFQSSIVYRQLAFNCIHQQIDITDIDAVIALSQELKLDNNIDLENEDIGDIASKIAVISEVRNNLNHNLINLVKTTPRIIMEGRDIGTVVAPDADLKIFITASPYVRAVRRYNQLQAKGKTCILDEIIQQIILRDKRDKERKVGPLLPALGAFIIDTSKLSAIEVVEEVTNYIKNKIT</sequence>
<name>KCY_RICTY</name>
<evidence type="ECO:0000255" key="1">
    <source>
        <dbReference type="HAMAP-Rule" id="MF_00238"/>
    </source>
</evidence>
<accession>Q68WL3</accession>
<dbReference type="EC" id="2.7.4.25" evidence="1"/>
<dbReference type="EMBL" id="AE017197">
    <property type="protein sequence ID" value="AAU03979.1"/>
    <property type="molecule type" value="Genomic_DNA"/>
</dbReference>
<dbReference type="RefSeq" id="WP_011190960.1">
    <property type="nucleotide sequence ID" value="NC_006142.1"/>
</dbReference>
<dbReference type="SMR" id="Q68WL3"/>
<dbReference type="KEGG" id="rty:RT0509"/>
<dbReference type="eggNOG" id="COG0283">
    <property type="taxonomic scope" value="Bacteria"/>
</dbReference>
<dbReference type="HOGENOM" id="CLU_079959_0_2_5"/>
<dbReference type="OrthoDB" id="9807434at2"/>
<dbReference type="Proteomes" id="UP000000604">
    <property type="component" value="Chromosome"/>
</dbReference>
<dbReference type="GO" id="GO:0005737">
    <property type="term" value="C:cytoplasm"/>
    <property type="evidence" value="ECO:0007669"/>
    <property type="project" value="UniProtKB-SubCell"/>
</dbReference>
<dbReference type="GO" id="GO:0005524">
    <property type="term" value="F:ATP binding"/>
    <property type="evidence" value="ECO:0007669"/>
    <property type="project" value="UniProtKB-UniRule"/>
</dbReference>
<dbReference type="GO" id="GO:0036430">
    <property type="term" value="F:CMP kinase activity"/>
    <property type="evidence" value="ECO:0007669"/>
    <property type="project" value="RHEA"/>
</dbReference>
<dbReference type="GO" id="GO:0036431">
    <property type="term" value="F:dCMP kinase activity"/>
    <property type="evidence" value="ECO:0007669"/>
    <property type="project" value="RHEA"/>
</dbReference>
<dbReference type="GO" id="GO:0006220">
    <property type="term" value="P:pyrimidine nucleotide metabolic process"/>
    <property type="evidence" value="ECO:0007669"/>
    <property type="project" value="UniProtKB-UniRule"/>
</dbReference>
<dbReference type="CDD" id="cd02020">
    <property type="entry name" value="CMPK"/>
    <property type="match status" value="1"/>
</dbReference>
<dbReference type="Gene3D" id="3.40.50.300">
    <property type="entry name" value="P-loop containing nucleotide triphosphate hydrolases"/>
    <property type="match status" value="1"/>
</dbReference>
<dbReference type="HAMAP" id="MF_00238">
    <property type="entry name" value="Cytidyl_kinase_type1"/>
    <property type="match status" value="1"/>
</dbReference>
<dbReference type="InterPro" id="IPR003136">
    <property type="entry name" value="Cytidylate_kin"/>
</dbReference>
<dbReference type="InterPro" id="IPR011994">
    <property type="entry name" value="Cytidylate_kinase_dom"/>
</dbReference>
<dbReference type="InterPro" id="IPR027417">
    <property type="entry name" value="P-loop_NTPase"/>
</dbReference>
<dbReference type="NCBIfam" id="TIGR00017">
    <property type="entry name" value="cmk"/>
    <property type="match status" value="1"/>
</dbReference>
<dbReference type="Pfam" id="PF02224">
    <property type="entry name" value="Cytidylate_kin"/>
    <property type="match status" value="1"/>
</dbReference>
<dbReference type="SUPFAM" id="SSF52540">
    <property type="entry name" value="P-loop containing nucleoside triphosphate hydrolases"/>
    <property type="match status" value="1"/>
</dbReference>
<comment type="catalytic activity">
    <reaction evidence="1">
        <text>CMP + ATP = CDP + ADP</text>
        <dbReference type="Rhea" id="RHEA:11600"/>
        <dbReference type="ChEBI" id="CHEBI:30616"/>
        <dbReference type="ChEBI" id="CHEBI:58069"/>
        <dbReference type="ChEBI" id="CHEBI:60377"/>
        <dbReference type="ChEBI" id="CHEBI:456216"/>
        <dbReference type="EC" id="2.7.4.25"/>
    </reaction>
</comment>
<comment type="catalytic activity">
    <reaction evidence="1">
        <text>dCMP + ATP = dCDP + ADP</text>
        <dbReference type="Rhea" id="RHEA:25094"/>
        <dbReference type="ChEBI" id="CHEBI:30616"/>
        <dbReference type="ChEBI" id="CHEBI:57566"/>
        <dbReference type="ChEBI" id="CHEBI:58593"/>
        <dbReference type="ChEBI" id="CHEBI:456216"/>
        <dbReference type="EC" id="2.7.4.25"/>
    </reaction>
</comment>
<comment type="subcellular location">
    <subcellularLocation>
        <location evidence="1">Cytoplasm</location>
    </subcellularLocation>
</comment>
<comment type="similarity">
    <text evidence="1">Belongs to the cytidylate kinase family. Type 1 subfamily.</text>
</comment>
<organism>
    <name type="scientific">Rickettsia typhi (strain ATCC VR-144 / Wilmington)</name>
    <dbReference type="NCBI Taxonomy" id="257363"/>
    <lineage>
        <taxon>Bacteria</taxon>
        <taxon>Pseudomonadati</taxon>
        <taxon>Pseudomonadota</taxon>
        <taxon>Alphaproteobacteria</taxon>
        <taxon>Rickettsiales</taxon>
        <taxon>Rickettsiaceae</taxon>
        <taxon>Rickettsieae</taxon>
        <taxon>Rickettsia</taxon>
        <taxon>typhus group</taxon>
    </lineage>
</organism>
<protein>
    <recommendedName>
        <fullName evidence="1">Cytidylate kinase</fullName>
        <shortName evidence="1">CK</shortName>
        <ecNumber evidence="1">2.7.4.25</ecNumber>
    </recommendedName>
    <alternativeName>
        <fullName evidence="1">Cytidine monophosphate kinase</fullName>
        <shortName evidence="1">CMP kinase</shortName>
    </alternativeName>
</protein>
<gene>
    <name evidence="1" type="primary">cmk</name>
    <name type="ordered locus">RT0509</name>
</gene>
<keyword id="KW-0067">ATP-binding</keyword>
<keyword id="KW-0963">Cytoplasm</keyword>
<keyword id="KW-0418">Kinase</keyword>
<keyword id="KW-0547">Nucleotide-binding</keyword>
<keyword id="KW-0808">Transferase</keyword>